<keyword id="KW-0007">Acetylation</keyword>
<keyword id="KW-0067">ATP-binding</keyword>
<keyword id="KW-0131">Cell cycle</keyword>
<keyword id="KW-0132">Cell division</keyword>
<keyword id="KW-0137">Centromere</keyword>
<keyword id="KW-0158">Chromosome</keyword>
<keyword id="KW-0963">Cytoplasm</keyword>
<keyword id="KW-0206">Cytoskeleton</keyword>
<keyword id="KW-0418">Kinase</keyword>
<keyword id="KW-0995">Kinetochore</keyword>
<keyword id="KW-0498">Mitosis</keyword>
<keyword id="KW-0547">Nucleotide-binding</keyword>
<keyword id="KW-0539">Nucleus</keyword>
<keyword id="KW-0597">Phosphoprotein</keyword>
<keyword id="KW-1185">Reference proteome</keyword>
<keyword id="KW-0723">Serine/threonine-protein kinase</keyword>
<keyword id="KW-0808">Transferase</keyword>
<keyword id="KW-0832">Ubl conjugation</keyword>
<sequence>MAQKENAYPWPYGSKTSQSGLNTLSQRVLRKEPATTSALALVNRFNSQSTAAPGQKLAENKSQGSTASQGSQNKQPFTIDNFEIGRPLGKGKFGNVYLAREKKSRFIVALKILFKSQIEKEGVEHQLRREIEIQAHLKHPNILQLYNYFYDQQRIYLILEYAPRGELYKELQKSRTFDEQRTATIMEELSDALTYCHKKKVIHRDIKPENLLLGLQGELKIADFGWSVHAPSLRRKTMCGTLDYLPPEMIEGRMHNEMVDLWCIGVLCYELMVGNPPFESPSHSETYRRIVKVDLKFPSSVPSGAQDLISKLLKHNPWQRLPLAEVAAHPWVRANSRRVLPPSAL</sequence>
<feature type="chain" id="PRO_0000085657" description="Aurora kinase B">
    <location>
        <begin position="1"/>
        <end position="345"/>
    </location>
</feature>
<feature type="domain" description="Protein kinase" evidence="2">
    <location>
        <begin position="82"/>
        <end position="332"/>
    </location>
</feature>
<feature type="region of interest" description="Disordered" evidence="4">
    <location>
        <begin position="1"/>
        <end position="25"/>
    </location>
</feature>
<feature type="region of interest" description="Disordered" evidence="4">
    <location>
        <begin position="50"/>
        <end position="77"/>
    </location>
</feature>
<feature type="compositionally biased region" description="Polar residues" evidence="4">
    <location>
        <begin position="14"/>
        <end position="25"/>
    </location>
</feature>
<feature type="compositionally biased region" description="Polar residues" evidence="4">
    <location>
        <begin position="60"/>
        <end position="77"/>
    </location>
</feature>
<feature type="active site" description="Proton acceptor" evidence="2 3">
    <location>
        <position position="205"/>
    </location>
</feature>
<feature type="binding site" evidence="2">
    <location>
        <begin position="88"/>
        <end position="96"/>
    </location>
    <ligand>
        <name>ATP</name>
        <dbReference type="ChEBI" id="CHEBI:30616"/>
    </ligand>
</feature>
<feature type="binding site" evidence="2">
    <location>
        <position position="111"/>
    </location>
    <ligand>
        <name>ATP</name>
        <dbReference type="ChEBI" id="CHEBI:30616"/>
    </ligand>
</feature>
<feature type="modified residue" description="Phosphothreonine" evidence="1">
    <location>
        <position position="35"/>
    </location>
</feature>
<feature type="modified residue" description="Phosphoserine" evidence="1">
    <location>
        <position position="62"/>
    </location>
</feature>
<feature type="modified residue" description="N6-acetyllysine" evidence="1">
    <location>
        <position position="220"/>
    </location>
</feature>
<feature type="modified residue" description="Phosphoserine" evidence="1">
    <location>
        <position position="232"/>
    </location>
</feature>
<feature type="modified residue" description="Phosphothreonine; by autocatalysis" evidence="1">
    <location>
        <position position="237"/>
    </location>
</feature>
<feature type="sequence conflict" description="In Ref. 1; BAA04658." evidence="12" ref="1">
    <original>R</original>
    <variation>W</variation>
    <location>
        <position position="44"/>
    </location>
</feature>
<feature type="sequence conflict" description="In Ref. 1; BAA04658, 2; AAC12683 and 6; AAH03261." evidence="12" ref="1 2 6">
    <original>F</original>
    <variation>S</variation>
    <location>
        <position position="45"/>
    </location>
</feature>
<organism>
    <name type="scientific">Mus musculus</name>
    <name type="common">Mouse</name>
    <dbReference type="NCBI Taxonomy" id="10090"/>
    <lineage>
        <taxon>Eukaryota</taxon>
        <taxon>Metazoa</taxon>
        <taxon>Chordata</taxon>
        <taxon>Craniata</taxon>
        <taxon>Vertebrata</taxon>
        <taxon>Euteleostomi</taxon>
        <taxon>Mammalia</taxon>
        <taxon>Eutheria</taxon>
        <taxon>Euarchontoglires</taxon>
        <taxon>Glires</taxon>
        <taxon>Rodentia</taxon>
        <taxon>Myomorpha</taxon>
        <taxon>Muroidea</taxon>
        <taxon>Muridae</taxon>
        <taxon>Murinae</taxon>
        <taxon>Mus</taxon>
        <taxon>Mus</taxon>
    </lineage>
</organism>
<evidence type="ECO:0000250" key="1">
    <source>
        <dbReference type="UniProtKB" id="Q96GD4"/>
    </source>
</evidence>
<evidence type="ECO:0000255" key="2">
    <source>
        <dbReference type="PROSITE-ProRule" id="PRU00159"/>
    </source>
</evidence>
<evidence type="ECO:0000255" key="3">
    <source>
        <dbReference type="PROSITE-ProRule" id="PRU10027"/>
    </source>
</evidence>
<evidence type="ECO:0000256" key="4">
    <source>
        <dbReference type="SAM" id="MobiDB-lite"/>
    </source>
</evidence>
<evidence type="ECO:0000269" key="5">
    <source>
    </source>
</evidence>
<evidence type="ECO:0000269" key="6">
    <source>
    </source>
</evidence>
<evidence type="ECO:0000269" key="7">
    <source>
    </source>
</evidence>
<evidence type="ECO:0000269" key="8">
    <source>
    </source>
</evidence>
<evidence type="ECO:0000303" key="9">
    <source>
    </source>
</evidence>
<evidence type="ECO:0000303" key="10">
    <source>
    </source>
</evidence>
<evidence type="ECO:0000303" key="11">
    <source>
    </source>
</evidence>
<evidence type="ECO:0000305" key="12"/>
<protein>
    <recommendedName>
        <fullName evidence="9">Aurora kinase B</fullName>
        <ecNumber evidence="6">2.7.11.1</ecNumber>
    </recommendedName>
    <alternativeName>
        <fullName>Aurora 1</fullName>
    </alternativeName>
    <alternativeName>
        <fullName>Aurora- and IPL1-like midbody-associated protein 1</fullName>
    </alternativeName>
    <alternativeName>
        <fullName evidence="11">Aurora/IPL1-related kinase 2</fullName>
        <shortName evidence="11">ARK-2</shortName>
        <shortName>Aurora-related kinase 2</shortName>
    </alternativeName>
    <alternativeName>
        <fullName evidence="10">STK-1</fullName>
    </alternativeName>
    <alternativeName>
        <fullName>Serine/threonine-protein kinase 12</fullName>
    </alternativeName>
    <alternativeName>
        <fullName>Serine/threonine-protein kinase 5</fullName>
    </alternativeName>
    <alternativeName>
        <fullName evidence="12">Serine/threonine-protein kinase aurora-B</fullName>
    </alternativeName>
</protein>
<dbReference type="EC" id="2.7.11.1" evidence="6"/>
<dbReference type="EMBL" id="D21099">
    <property type="protein sequence ID" value="BAA04658.1"/>
    <property type="molecule type" value="mRNA"/>
</dbReference>
<dbReference type="EMBL" id="U69107">
    <property type="protein sequence ID" value="AAC12683.1"/>
    <property type="molecule type" value="mRNA"/>
</dbReference>
<dbReference type="EMBL" id="AK075951">
    <property type="protein sequence ID" value="BAC36078.1"/>
    <property type="molecule type" value="mRNA"/>
</dbReference>
<dbReference type="EMBL" id="AK132006">
    <property type="protein sequence ID" value="BAE20935.1"/>
    <property type="molecule type" value="mRNA"/>
</dbReference>
<dbReference type="EMBL" id="AL645902">
    <property type="status" value="NOT_ANNOTATED_CDS"/>
    <property type="molecule type" value="Genomic_DNA"/>
</dbReference>
<dbReference type="EMBL" id="CH466601">
    <property type="protein sequence ID" value="EDL10472.1"/>
    <property type="molecule type" value="Genomic_DNA"/>
</dbReference>
<dbReference type="EMBL" id="BC003261">
    <property type="protein sequence ID" value="AAH03261.1"/>
    <property type="molecule type" value="mRNA"/>
</dbReference>
<dbReference type="CCDS" id="CCDS24877.1"/>
<dbReference type="PIR" id="JC4665">
    <property type="entry name" value="JC4665"/>
</dbReference>
<dbReference type="RefSeq" id="NP_035626.1">
    <property type="nucleotide sequence ID" value="NM_011496.3"/>
</dbReference>
<dbReference type="SMR" id="O70126"/>
<dbReference type="BioGRID" id="203547">
    <property type="interactions" value="31"/>
</dbReference>
<dbReference type="ComplexPortal" id="CPX-119">
    <property type="entry name" value="Chromosomal passenger complex"/>
</dbReference>
<dbReference type="FunCoup" id="O70126">
    <property type="interactions" value="1370"/>
</dbReference>
<dbReference type="IntAct" id="O70126">
    <property type="interactions" value="15"/>
</dbReference>
<dbReference type="MINT" id="O70126"/>
<dbReference type="STRING" id="10090.ENSMUSP00000021277"/>
<dbReference type="BindingDB" id="O70126"/>
<dbReference type="ChEMBL" id="CHEMBL1075275"/>
<dbReference type="CarbonylDB" id="O70126"/>
<dbReference type="GlyGen" id="O70126">
    <property type="glycosylation" value="1 site, 1 O-linked glycan (1 site)"/>
</dbReference>
<dbReference type="iPTMnet" id="O70126"/>
<dbReference type="PhosphoSitePlus" id="O70126"/>
<dbReference type="PaxDb" id="10090-ENSMUSP00000021277"/>
<dbReference type="PeptideAtlas" id="O70126"/>
<dbReference type="ProteomicsDB" id="273505"/>
<dbReference type="Pumba" id="O70126"/>
<dbReference type="Antibodypedia" id="3128">
    <property type="antibodies" value="1163 antibodies from 47 providers"/>
</dbReference>
<dbReference type="DNASU" id="20877"/>
<dbReference type="Ensembl" id="ENSMUST00000021277.6">
    <property type="protein sequence ID" value="ENSMUSP00000021277.6"/>
    <property type="gene ID" value="ENSMUSG00000020897.13"/>
</dbReference>
<dbReference type="Ensembl" id="ENSMUST00000108666.8">
    <property type="protein sequence ID" value="ENSMUSP00000104306.2"/>
    <property type="gene ID" value="ENSMUSG00000020897.13"/>
</dbReference>
<dbReference type="GeneID" id="20877"/>
<dbReference type="KEGG" id="mmu:20877"/>
<dbReference type="UCSC" id="uc007jpa.1">
    <property type="organism name" value="mouse"/>
</dbReference>
<dbReference type="AGR" id="MGI:107168"/>
<dbReference type="CTD" id="9212"/>
<dbReference type="MGI" id="MGI:107168">
    <property type="gene designation" value="Aurkb"/>
</dbReference>
<dbReference type="VEuPathDB" id="HostDB:ENSMUSG00000020897"/>
<dbReference type="eggNOG" id="KOG0580">
    <property type="taxonomic scope" value="Eukaryota"/>
</dbReference>
<dbReference type="GeneTree" id="ENSGT00940000158980"/>
<dbReference type="HOGENOM" id="CLU_000288_63_0_1"/>
<dbReference type="InParanoid" id="O70126"/>
<dbReference type="OMA" id="KNRPCIK"/>
<dbReference type="OrthoDB" id="377346at2759"/>
<dbReference type="PhylomeDB" id="O70126"/>
<dbReference type="TreeFam" id="TF351439"/>
<dbReference type="Reactome" id="R-MMU-141444">
    <property type="pathway name" value="Amplification of signal from unattached kinetochores via a MAD2 inhibitory signal"/>
</dbReference>
<dbReference type="Reactome" id="R-MMU-174178">
    <property type="pathway name" value="APC/C:Cdh1 mediated degradation of Cdc20 and other APC/C:Cdh1 targeted proteins in late mitosis/early G1"/>
</dbReference>
<dbReference type="Reactome" id="R-MMU-2467813">
    <property type="pathway name" value="Separation of Sister Chromatids"/>
</dbReference>
<dbReference type="Reactome" id="R-MMU-2500257">
    <property type="pathway name" value="Resolution of Sister Chromatid Cohesion"/>
</dbReference>
<dbReference type="Reactome" id="R-MMU-4615885">
    <property type="pathway name" value="SUMOylation of DNA replication proteins"/>
</dbReference>
<dbReference type="Reactome" id="R-MMU-5663220">
    <property type="pathway name" value="RHO GTPases Activate Formins"/>
</dbReference>
<dbReference type="Reactome" id="R-MMU-6804756">
    <property type="pathway name" value="Regulation of TP53 Activity through Phosphorylation"/>
</dbReference>
<dbReference type="Reactome" id="R-MMU-68877">
    <property type="pathway name" value="Mitotic Prometaphase"/>
</dbReference>
<dbReference type="Reactome" id="R-MMU-9648025">
    <property type="pathway name" value="EML4 and NUDC in mitotic spindle formation"/>
</dbReference>
<dbReference type="BioGRID-ORCS" id="20877">
    <property type="hits" value="26 hits in 83 CRISPR screens"/>
</dbReference>
<dbReference type="ChiTaRS" id="Aurkb">
    <property type="organism name" value="mouse"/>
</dbReference>
<dbReference type="PRO" id="PR:O70126"/>
<dbReference type="Proteomes" id="UP000000589">
    <property type="component" value="Chromosome 11"/>
</dbReference>
<dbReference type="RNAct" id="O70126">
    <property type="molecule type" value="protein"/>
</dbReference>
<dbReference type="Bgee" id="ENSMUSG00000020897">
    <property type="expression patterns" value="Expressed in embryonic post-anal tail and 181 other cell types or tissues"/>
</dbReference>
<dbReference type="GO" id="GO:0010369">
    <property type="term" value="C:chromocenter"/>
    <property type="evidence" value="ECO:0000314"/>
    <property type="project" value="MGI"/>
</dbReference>
<dbReference type="GO" id="GO:0005694">
    <property type="term" value="C:chromosome"/>
    <property type="evidence" value="ECO:0000314"/>
    <property type="project" value="MGI"/>
</dbReference>
<dbReference type="GO" id="GO:0032133">
    <property type="term" value="C:chromosome passenger complex"/>
    <property type="evidence" value="ECO:0000314"/>
    <property type="project" value="MGI"/>
</dbReference>
<dbReference type="GO" id="GO:0000775">
    <property type="term" value="C:chromosome, centromeric region"/>
    <property type="evidence" value="ECO:0000314"/>
    <property type="project" value="MGI"/>
</dbReference>
<dbReference type="GO" id="GO:0000779">
    <property type="term" value="C:condensed chromosome, centromeric region"/>
    <property type="evidence" value="ECO:0000314"/>
    <property type="project" value="MGI"/>
</dbReference>
<dbReference type="GO" id="GO:0005737">
    <property type="term" value="C:cytoplasm"/>
    <property type="evidence" value="ECO:0007669"/>
    <property type="project" value="UniProtKB-KW"/>
</dbReference>
<dbReference type="GO" id="GO:0000776">
    <property type="term" value="C:kinetochore"/>
    <property type="evidence" value="ECO:0000250"/>
    <property type="project" value="UniProtKB"/>
</dbReference>
<dbReference type="GO" id="GO:0015630">
    <property type="term" value="C:microtubule cytoskeleton"/>
    <property type="evidence" value="ECO:0000266"/>
    <property type="project" value="ComplexPortal"/>
</dbReference>
<dbReference type="GO" id="GO:0030496">
    <property type="term" value="C:midbody"/>
    <property type="evidence" value="ECO:0000314"/>
    <property type="project" value="MGI"/>
</dbReference>
<dbReference type="GO" id="GO:1990023">
    <property type="term" value="C:mitotic spindle midzone"/>
    <property type="evidence" value="ECO:0000314"/>
    <property type="project" value="MGI"/>
</dbReference>
<dbReference type="GO" id="GO:0097431">
    <property type="term" value="C:mitotic spindle pole"/>
    <property type="evidence" value="ECO:0000314"/>
    <property type="project" value="MGI"/>
</dbReference>
<dbReference type="GO" id="GO:0005654">
    <property type="term" value="C:nucleoplasm"/>
    <property type="evidence" value="ECO:0000304"/>
    <property type="project" value="Reactome"/>
</dbReference>
<dbReference type="GO" id="GO:0005634">
    <property type="term" value="C:nucleus"/>
    <property type="evidence" value="ECO:0000314"/>
    <property type="project" value="MGI"/>
</dbReference>
<dbReference type="GO" id="GO:0005524">
    <property type="term" value="F:ATP binding"/>
    <property type="evidence" value="ECO:0007669"/>
    <property type="project" value="UniProtKB-KW"/>
</dbReference>
<dbReference type="GO" id="GO:0044022">
    <property type="term" value="F:histone H3S28 kinase activity"/>
    <property type="evidence" value="ECO:0000314"/>
    <property type="project" value="UniProtKB"/>
</dbReference>
<dbReference type="GO" id="GO:0019900">
    <property type="term" value="F:kinase binding"/>
    <property type="evidence" value="ECO:0007669"/>
    <property type="project" value="Ensembl"/>
</dbReference>
<dbReference type="GO" id="GO:0106310">
    <property type="term" value="F:protein serine kinase activity"/>
    <property type="evidence" value="ECO:0007669"/>
    <property type="project" value="RHEA"/>
</dbReference>
<dbReference type="GO" id="GO:0004674">
    <property type="term" value="F:protein serine/threonine kinase activity"/>
    <property type="evidence" value="ECO:0000314"/>
    <property type="project" value="UniProtKB"/>
</dbReference>
<dbReference type="GO" id="GO:0044839">
    <property type="term" value="P:cell cycle G2/M phase transition"/>
    <property type="evidence" value="ECO:0007669"/>
    <property type="project" value="Ensembl"/>
</dbReference>
<dbReference type="GO" id="GO:0034644">
    <property type="term" value="P:cellular response to UV"/>
    <property type="evidence" value="ECO:0000250"/>
    <property type="project" value="UniProtKB"/>
</dbReference>
<dbReference type="GO" id="GO:0036089">
    <property type="term" value="P:cleavage furrow formation"/>
    <property type="evidence" value="ECO:0000250"/>
    <property type="project" value="UniProtKB"/>
</dbReference>
<dbReference type="GO" id="GO:0061952">
    <property type="term" value="P:midbody abscission"/>
    <property type="evidence" value="ECO:0000250"/>
    <property type="project" value="UniProtKB"/>
</dbReference>
<dbReference type="GO" id="GO:0000278">
    <property type="term" value="P:mitotic cell cycle"/>
    <property type="evidence" value="ECO:0000303"/>
    <property type="project" value="ComplexPortal"/>
</dbReference>
<dbReference type="GO" id="GO:0000281">
    <property type="term" value="P:mitotic cytokinesis"/>
    <property type="evidence" value="ECO:0000303"/>
    <property type="project" value="ComplexPortal"/>
</dbReference>
<dbReference type="GO" id="GO:0044878">
    <property type="term" value="P:mitotic cytokinesis checkpoint signaling"/>
    <property type="evidence" value="ECO:0000250"/>
    <property type="project" value="UniProtKB"/>
</dbReference>
<dbReference type="GO" id="GO:1990758">
    <property type="term" value="P:mitotic sister chromatid biorientation"/>
    <property type="evidence" value="ECO:0000250"/>
    <property type="project" value="UniProtKB"/>
</dbReference>
<dbReference type="GO" id="GO:0051256">
    <property type="term" value="P:mitotic spindle midzone assembly"/>
    <property type="evidence" value="ECO:0000250"/>
    <property type="project" value="UniProtKB"/>
</dbReference>
<dbReference type="GO" id="GO:0007052">
    <property type="term" value="P:mitotic spindle organization"/>
    <property type="evidence" value="ECO:0000303"/>
    <property type="project" value="ComplexPortal"/>
</dbReference>
<dbReference type="GO" id="GO:0002903">
    <property type="term" value="P:negative regulation of B cell apoptotic process"/>
    <property type="evidence" value="ECO:0000250"/>
    <property type="project" value="UniProtKB"/>
</dbReference>
<dbReference type="GO" id="GO:0160049">
    <property type="term" value="P:negative regulation of cGAS/STING signaling pathway"/>
    <property type="evidence" value="ECO:0007669"/>
    <property type="project" value="Ensembl"/>
</dbReference>
<dbReference type="GO" id="GO:0032466">
    <property type="term" value="P:negative regulation of cytokinesis"/>
    <property type="evidence" value="ECO:0000250"/>
    <property type="project" value="UniProtKB"/>
</dbReference>
<dbReference type="GO" id="GO:0045824">
    <property type="term" value="P:negative regulation of innate immune response"/>
    <property type="evidence" value="ECO:0007669"/>
    <property type="project" value="Ensembl"/>
</dbReference>
<dbReference type="GO" id="GO:0000122">
    <property type="term" value="P:negative regulation of transcription by RNA polymerase II"/>
    <property type="evidence" value="ECO:0000250"/>
    <property type="project" value="UniProtKB"/>
</dbReference>
<dbReference type="GO" id="GO:1902425">
    <property type="term" value="P:positive regulation of attachment of mitotic spindle microtubules to kinetochore"/>
    <property type="evidence" value="ECO:0000303"/>
    <property type="project" value="ComplexPortal"/>
</dbReference>
<dbReference type="GO" id="GO:0032467">
    <property type="term" value="P:positive regulation of cytokinesis"/>
    <property type="evidence" value="ECO:0000250"/>
    <property type="project" value="UniProtKB"/>
</dbReference>
<dbReference type="GO" id="GO:1905116">
    <property type="term" value="P:positive regulation of lateral attachment of mitotic spindle microtubules to kinetochore"/>
    <property type="evidence" value="ECO:0007669"/>
    <property type="project" value="Ensembl"/>
</dbReference>
<dbReference type="GO" id="GO:0031117">
    <property type="term" value="P:positive regulation of microtubule depolymerization"/>
    <property type="evidence" value="ECO:0007669"/>
    <property type="project" value="Ensembl"/>
</dbReference>
<dbReference type="GO" id="GO:0090267">
    <property type="term" value="P:positive regulation of mitotic cell cycle spindle assembly checkpoint"/>
    <property type="evidence" value="ECO:0000303"/>
    <property type="project" value="ComplexPortal"/>
</dbReference>
<dbReference type="GO" id="GO:1903490">
    <property type="term" value="P:positive regulation of mitotic cytokinesis"/>
    <property type="evidence" value="ECO:0000303"/>
    <property type="project" value="ComplexPortal"/>
</dbReference>
<dbReference type="GO" id="GO:0062033">
    <property type="term" value="P:positive regulation of mitotic sister chromatid segregation"/>
    <property type="evidence" value="ECO:0000250"/>
    <property type="project" value="UniProtKB"/>
</dbReference>
<dbReference type="GO" id="GO:1901970">
    <property type="term" value="P:positive regulation of mitotic sister chromatid separation"/>
    <property type="evidence" value="ECO:0000303"/>
    <property type="project" value="ComplexPortal"/>
</dbReference>
<dbReference type="GO" id="GO:0032206">
    <property type="term" value="P:positive regulation of telomere maintenance"/>
    <property type="evidence" value="ECO:0007669"/>
    <property type="project" value="Ensembl"/>
</dbReference>
<dbReference type="GO" id="GO:0043687">
    <property type="term" value="P:post-translational protein modification"/>
    <property type="evidence" value="ECO:0000314"/>
    <property type="project" value="UniProtKB"/>
</dbReference>
<dbReference type="GO" id="GO:0034501">
    <property type="term" value="P:protein localization to kinetochore"/>
    <property type="evidence" value="ECO:0000250"/>
    <property type="project" value="UniProtKB"/>
</dbReference>
<dbReference type="GO" id="GO:0140273">
    <property type="term" value="P:repair of mitotic kinetochore microtubule attachment defect"/>
    <property type="evidence" value="ECO:0000250"/>
    <property type="project" value="UniProtKB"/>
</dbReference>
<dbReference type="FunFam" id="3.30.200.20:FF:000042">
    <property type="entry name" value="Aurora kinase A"/>
    <property type="match status" value="1"/>
</dbReference>
<dbReference type="FunFam" id="1.10.510.10:FF:000235">
    <property type="entry name" value="Serine/threonine-protein kinase ark1"/>
    <property type="match status" value="1"/>
</dbReference>
<dbReference type="Gene3D" id="3.30.200.20">
    <property type="entry name" value="Phosphorylase Kinase, domain 1"/>
    <property type="match status" value="1"/>
</dbReference>
<dbReference type="Gene3D" id="1.10.510.10">
    <property type="entry name" value="Transferase(Phosphotransferase) domain 1"/>
    <property type="match status" value="1"/>
</dbReference>
<dbReference type="InterPro" id="IPR030616">
    <property type="entry name" value="Aur-like"/>
</dbReference>
<dbReference type="InterPro" id="IPR011009">
    <property type="entry name" value="Kinase-like_dom_sf"/>
</dbReference>
<dbReference type="InterPro" id="IPR000719">
    <property type="entry name" value="Prot_kinase_dom"/>
</dbReference>
<dbReference type="InterPro" id="IPR017441">
    <property type="entry name" value="Protein_kinase_ATP_BS"/>
</dbReference>
<dbReference type="InterPro" id="IPR008271">
    <property type="entry name" value="Ser/Thr_kinase_AS"/>
</dbReference>
<dbReference type="PANTHER" id="PTHR24350">
    <property type="entry name" value="SERINE/THREONINE-PROTEIN KINASE IAL-RELATED"/>
    <property type="match status" value="1"/>
</dbReference>
<dbReference type="Pfam" id="PF00069">
    <property type="entry name" value="Pkinase"/>
    <property type="match status" value="1"/>
</dbReference>
<dbReference type="SMART" id="SM00220">
    <property type="entry name" value="S_TKc"/>
    <property type="match status" value="1"/>
</dbReference>
<dbReference type="SUPFAM" id="SSF56112">
    <property type="entry name" value="Protein kinase-like (PK-like)"/>
    <property type="match status" value="1"/>
</dbReference>
<dbReference type="PROSITE" id="PS00107">
    <property type="entry name" value="PROTEIN_KINASE_ATP"/>
    <property type="match status" value="1"/>
</dbReference>
<dbReference type="PROSITE" id="PS50011">
    <property type="entry name" value="PROTEIN_KINASE_DOM"/>
    <property type="match status" value="1"/>
</dbReference>
<dbReference type="PROSITE" id="PS00108">
    <property type="entry name" value="PROTEIN_KINASE_ST"/>
    <property type="match status" value="1"/>
</dbReference>
<proteinExistence type="evidence at protein level"/>
<name>AURKB_MOUSE</name>
<gene>
    <name type="primary">Aurkb</name>
    <name type="synonym">Aik2</name>
    <name type="synonym">Aim1</name>
    <name type="synonym">Airk2</name>
    <name evidence="11" type="synonym">Ark2</name>
    <name evidence="10" type="synonym">Stk1</name>
    <name type="synonym">Stk12</name>
    <name type="synonym">Stk5</name>
</gene>
<accession>O70126</accession>
<accession>Q61882</accession>
<accession>Q8C6C1</accession>
<reference key="1">
    <citation type="journal article" date="1996" name="Gene">
        <title>Cell-cycle-dependent expression of the STK-1 gene encoding a novel murine putative protein kinase.</title>
        <authorList>
            <person name="Niwa H."/>
            <person name="Abe K."/>
            <person name="Kunisada T."/>
            <person name="Yamamura K."/>
        </authorList>
    </citation>
    <scope>NUCLEOTIDE SEQUENCE [MRNA]</scope>
    <scope>TISSUE SPECIFICITY</scope>
    <scope>DEVELOPMENTAL STAGE</scope>
    <source>
        <strain>C57BL/6J</strain>
        <tissue>Testis</tissue>
    </source>
</reference>
<reference key="2">
    <citation type="journal article" date="1998" name="Biochem. Biophys. Res. Commun.">
        <title>cDNA cloning, expression, subcellular localization, and chromosomal assignment of mammalian aurora homologues, aurora-related kinase (ARK) 1 and 2.</title>
        <authorList>
            <person name="Shindo M."/>
            <person name="Nakano H."/>
            <person name="Kuroyanagi H."/>
            <person name="Shirasawa T."/>
            <person name="Mihara M."/>
            <person name="Gilbert D.J."/>
            <person name="Jenkins N.A."/>
            <person name="Copeland N.G."/>
            <person name="Yagita H."/>
            <person name="Okumura K."/>
        </authorList>
    </citation>
    <scope>NUCLEOTIDE SEQUENCE [MRNA]</scope>
    <source>
        <strain>BALB/cJ</strain>
    </source>
</reference>
<reference key="3">
    <citation type="journal article" date="2005" name="Science">
        <title>The transcriptional landscape of the mammalian genome.</title>
        <authorList>
            <person name="Carninci P."/>
            <person name="Kasukawa T."/>
            <person name="Katayama S."/>
            <person name="Gough J."/>
            <person name="Frith M.C."/>
            <person name="Maeda N."/>
            <person name="Oyama R."/>
            <person name="Ravasi T."/>
            <person name="Lenhard B."/>
            <person name="Wells C."/>
            <person name="Kodzius R."/>
            <person name="Shimokawa K."/>
            <person name="Bajic V.B."/>
            <person name="Brenner S.E."/>
            <person name="Batalov S."/>
            <person name="Forrest A.R."/>
            <person name="Zavolan M."/>
            <person name="Davis M.J."/>
            <person name="Wilming L.G."/>
            <person name="Aidinis V."/>
            <person name="Allen J.E."/>
            <person name="Ambesi-Impiombato A."/>
            <person name="Apweiler R."/>
            <person name="Aturaliya R.N."/>
            <person name="Bailey T.L."/>
            <person name="Bansal M."/>
            <person name="Baxter L."/>
            <person name="Beisel K.W."/>
            <person name="Bersano T."/>
            <person name="Bono H."/>
            <person name="Chalk A.M."/>
            <person name="Chiu K.P."/>
            <person name="Choudhary V."/>
            <person name="Christoffels A."/>
            <person name="Clutterbuck D.R."/>
            <person name="Crowe M.L."/>
            <person name="Dalla E."/>
            <person name="Dalrymple B.P."/>
            <person name="de Bono B."/>
            <person name="Della Gatta G."/>
            <person name="di Bernardo D."/>
            <person name="Down T."/>
            <person name="Engstrom P."/>
            <person name="Fagiolini M."/>
            <person name="Faulkner G."/>
            <person name="Fletcher C.F."/>
            <person name="Fukushima T."/>
            <person name="Furuno M."/>
            <person name="Futaki S."/>
            <person name="Gariboldi M."/>
            <person name="Georgii-Hemming P."/>
            <person name="Gingeras T.R."/>
            <person name="Gojobori T."/>
            <person name="Green R.E."/>
            <person name="Gustincich S."/>
            <person name="Harbers M."/>
            <person name="Hayashi Y."/>
            <person name="Hensch T.K."/>
            <person name="Hirokawa N."/>
            <person name="Hill D."/>
            <person name="Huminiecki L."/>
            <person name="Iacono M."/>
            <person name="Ikeo K."/>
            <person name="Iwama A."/>
            <person name="Ishikawa T."/>
            <person name="Jakt M."/>
            <person name="Kanapin A."/>
            <person name="Katoh M."/>
            <person name="Kawasawa Y."/>
            <person name="Kelso J."/>
            <person name="Kitamura H."/>
            <person name="Kitano H."/>
            <person name="Kollias G."/>
            <person name="Krishnan S.P."/>
            <person name="Kruger A."/>
            <person name="Kummerfeld S.K."/>
            <person name="Kurochkin I.V."/>
            <person name="Lareau L.F."/>
            <person name="Lazarevic D."/>
            <person name="Lipovich L."/>
            <person name="Liu J."/>
            <person name="Liuni S."/>
            <person name="McWilliam S."/>
            <person name="Madan Babu M."/>
            <person name="Madera M."/>
            <person name="Marchionni L."/>
            <person name="Matsuda H."/>
            <person name="Matsuzawa S."/>
            <person name="Miki H."/>
            <person name="Mignone F."/>
            <person name="Miyake S."/>
            <person name="Morris K."/>
            <person name="Mottagui-Tabar S."/>
            <person name="Mulder N."/>
            <person name="Nakano N."/>
            <person name="Nakauchi H."/>
            <person name="Ng P."/>
            <person name="Nilsson R."/>
            <person name="Nishiguchi S."/>
            <person name="Nishikawa S."/>
            <person name="Nori F."/>
            <person name="Ohara O."/>
            <person name="Okazaki Y."/>
            <person name="Orlando V."/>
            <person name="Pang K.C."/>
            <person name="Pavan W.J."/>
            <person name="Pavesi G."/>
            <person name="Pesole G."/>
            <person name="Petrovsky N."/>
            <person name="Piazza S."/>
            <person name="Reed J."/>
            <person name="Reid J.F."/>
            <person name="Ring B.Z."/>
            <person name="Ringwald M."/>
            <person name="Rost B."/>
            <person name="Ruan Y."/>
            <person name="Salzberg S.L."/>
            <person name="Sandelin A."/>
            <person name="Schneider C."/>
            <person name="Schoenbach C."/>
            <person name="Sekiguchi K."/>
            <person name="Semple C.A."/>
            <person name="Seno S."/>
            <person name="Sessa L."/>
            <person name="Sheng Y."/>
            <person name="Shibata Y."/>
            <person name="Shimada H."/>
            <person name="Shimada K."/>
            <person name="Silva D."/>
            <person name="Sinclair B."/>
            <person name="Sperling S."/>
            <person name="Stupka E."/>
            <person name="Sugiura K."/>
            <person name="Sultana R."/>
            <person name="Takenaka Y."/>
            <person name="Taki K."/>
            <person name="Tammoja K."/>
            <person name="Tan S.L."/>
            <person name="Tang S."/>
            <person name="Taylor M.S."/>
            <person name="Tegner J."/>
            <person name="Teichmann S.A."/>
            <person name="Ueda H.R."/>
            <person name="van Nimwegen E."/>
            <person name="Verardo R."/>
            <person name="Wei C.L."/>
            <person name="Yagi K."/>
            <person name="Yamanishi H."/>
            <person name="Zabarovsky E."/>
            <person name="Zhu S."/>
            <person name="Zimmer A."/>
            <person name="Hide W."/>
            <person name="Bult C."/>
            <person name="Grimmond S.M."/>
            <person name="Teasdale R.D."/>
            <person name="Liu E.T."/>
            <person name="Brusic V."/>
            <person name="Quackenbush J."/>
            <person name="Wahlestedt C."/>
            <person name="Mattick J.S."/>
            <person name="Hume D.A."/>
            <person name="Kai C."/>
            <person name="Sasaki D."/>
            <person name="Tomaru Y."/>
            <person name="Fukuda S."/>
            <person name="Kanamori-Katayama M."/>
            <person name="Suzuki M."/>
            <person name="Aoki J."/>
            <person name="Arakawa T."/>
            <person name="Iida J."/>
            <person name="Imamura K."/>
            <person name="Itoh M."/>
            <person name="Kato T."/>
            <person name="Kawaji H."/>
            <person name="Kawagashira N."/>
            <person name="Kawashima T."/>
            <person name="Kojima M."/>
            <person name="Kondo S."/>
            <person name="Konno H."/>
            <person name="Nakano K."/>
            <person name="Ninomiya N."/>
            <person name="Nishio T."/>
            <person name="Okada M."/>
            <person name="Plessy C."/>
            <person name="Shibata K."/>
            <person name="Shiraki T."/>
            <person name="Suzuki S."/>
            <person name="Tagami M."/>
            <person name="Waki K."/>
            <person name="Watahiki A."/>
            <person name="Okamura-Oho Y."/>
            <person name="Suzuki H."/>
            <person name="Kawai J."/>
            <person name="Hayashizaki Y."/>
        </authorList>
    </citation>
    <scope>NUCLEOTIDE SEQUENCE [LARGE SCALE MRNA]</scope>
    <source>
        <strain>C57BL/6J</strain>
        <tissue>Embryo</tissue>
        <tissue>Embryonic stem cell</tissue>
    </source>
</reference>
<reference key="4">
    <citation type="journal article" date="2009" name="PLoS Biol.">
        <title>Lineage-specific biology revealed by a finished genome assembly of the mouse.</title>
        <authorList>
            <person name="Church D.M."/>
            <person name="Goodstadt L."/>
            <person name="Hillier L.W."/>
            <person name="Zody M.C."/>
            <person name="Goldstein S."/>
            <person name="She X."/>
            <person name="Bult C.J."/>
            <person name="Agarwala R."/>
            <person name="Cherry J.L."/>
            <person name="DiCuccio M."/>
            <person name="Hlavina W."/>
            <person name="Kapustin Y."/>
            <person name="Meric P."/>
            <person name="Maglott D."/>
            <person name="Birtle Z."/>
            <person name="Marques A.C."/>
            <person name="Graves T."/>
            <person name="Zhou S."/>
            <person name="Teague B."/>
            <person name="Potamousis K."/>
            <person name="Churas C."/>
            <person name="Place M."/>
            <person name="Herschleb J."/>
            <person name="Runnheim R."/>
            <person name="Forrest D."/>
            <person name="Amos-Landgraf J."/>
            <person name="Schwartz D.C."/>
            <person name="Cheng Z."/>
            <person name="Lindblad-Toh K."/>
            <person name="Eichler E.E."/>
            <person name="Ponting C.P."/>
        </authorList>
    </citation>
    <scope>NUCLEOTIDE SEQUENCE [LARGE SCALE GENOMIC DNA]</scope>
    <source>
        <strain>C57BL/6J</strain>
    </source>
</reference>
<reference key="5">
    <citation type="submission" date="2005-07" db="EMBL/GenBank/DDBJ databases">
        <authorList>
            <person name="Mural R.J."/>
            <person name="Adams M.D."/>
            <person name="Myers E.W."/>
            <person name="Smith H.O."/>
            <person name="Venter J.C."/>
        </authorList>
    </citation>
    <scope>NUCLEOTIDE SEQUENCE [LARGE SCALE GENOMIC DNA]</scope>
</reference>
<reference key="6">
    <citation type="journal article" date="2004" name="Genome Res.">
        <title>The status, quality, and expansion of the NIH full-length cDNA project: the Mammalian Gene Collection (MGC).</title>
        <authorList>
            <consortium name="The MGC Project Team"/>
        </authorList>
    </citation>
    <scope>NUCLEOTIDE SEQUENCE [LARGE SCALE MRNA]</scope>
    <source>
        <tissue>Mammary gland</tissue>
    </source>
</reference>
<reference key="7">
    <citation type="journal article" date="2002" name="Mol. Cell. Biol.">
        <title>Mitotic phosphorylation of histone H3: spatio-temporal regulation by mammalian Aurora kinases.</title>
        <authorList>
            <person name="Crosio C."/>
            <person name="Fimia G.M."/>
            <person name="Loury R."/>
            <person name="Kimura M."/>
            <person name="Okano Y."/>
            <person name="Zhou H."/>
            <person name="Sen S."/>
            <person name="Allis C.D."/>
            <person name="Sassone-Corsi P."/>
        </authorList>
    </citation>
    <scope>FUNCTION IN PHOSPHORYLATION OF HISTONE H3</scope>
</reference>
<reference key="8">
    <citation type="journal article" date="2010" name="Cell">
        <title>A tissue-specific atlas of mouse protein phosphorylation and expression.</title>
        <authorList>
            <person name="Huttlin E.L."/>
            <person name="Jedrychowski M.P."/>
            <person name="Elias J.E."/>
            <person name="Goswami T."/>
            <person name="Rad R."/>
            <person name="Beausoleil S.A."/>
            <person name="Villen J."/>
            <person name="Haas W."/>
            <person name="Sowa M.E."/>
            <person name="Gygi S.P."/>
        </authorList>
    </citation>
    <scope>IDENTIFICATION BY MASS SPECTROMETRY [LARGE SCALE ANALYSIS]</scope>
    <source>
        <tissue>Spleen</tissue>
    </source>
</reference>
<reference key="9">
    <citation type="journal article" date="2013" name="Mol. Cell">
        <title>The Aurora B kinase and the Polycomb protein Ring1B combine to regulate active promoters in quiescent lymphocytes.</title>
        <authorList>
            <person name="Frangini A."/>
            <person name="Sjoberg M."/>
            <person name="Roman-Trufero M."/>
            <person name="Dharmalingam G."/>
            <person name="Haberle V."/>
            <person name="Bartke T."/>
            <person name="Lenhard B."/>
            <person name="Malumbres M."/>
            <person name="Vidal M."/>
            <person name="Dillon N."/>
        </authorList>
    </citation>
    <scope>FUNCTION</scope>
    <scope>CATALYTIC ACTIVITY</scope>
    <scope>INTERACTION WITH RNF2</scope>
</reference>
<reference key="10">
    <citation type="journal article" date="2018" name="Biochem. Biophys. Res. Commun.">
        <title>Regulation of keratin 5/14 intermediate filaments by CDK1, Aurora-B, and Rho-kinase.</title>
        <authorList>
            <person name="Inaba H."/>
            <person name="Yamakawa D."/>
            <person name="Tomono Y."/>
            <person name="Enomoto A."/>
            <person name="Mii S."/>
            <person name="Kasahara K."/>
            <person name="Goto H."/>
            <person name="Inagaki M."/>
        </authorList>
    </citation>
    <scope>FUNCTION</scope>
</reference>
<comment type="function">
    <text evidence="1 5 6 7">Serine/threonine-protein kinase component of the chromosomal passenger complex (CPC), a complex that acts as a key regulator of mitosis (By similarity). The CPC complex has essential functions at the centromere in ensuring correct chromosome alignment and segregation and is required for chromatin-induced microtubule stabilization and spindle assembly (By similarity). Involved in the bipolar attachment of spindle microtubules to kinetochores and is a key regulator for the onset of cytokinesis during mitosis (By similarity). Required for central/midzone spindle assembly and cleavage furrow formation (By similarity). Key component of the cytokinesis checkpoint, a process required to delay abscission to prevent both premature resolution of intercellular chromosome bridges and accumulation of DNA damage: phosphorylates CHMP4C, leading to retain abscission-competent VPS4 (VPS4A and/or VPS4B) at the midbody ring until abscission checkpoint signaling is terminated at late cytokinesis (By similarity). AURKB phosphorylates the CPC complex subunits BIRC5/survivin, CDCA8/borealin and INCENP (By similarity). Phosphorylation of INCENP leads to increased AURKB activity (By similarity). Other known AURKB substrates involved in centromeric functions and mitosis are CENPA, DES/desmin, GPAF, KIF2C, NSUN2, RACGAP1, SEPTIN1, VIM/vimentin, HASPIN, and histone H3 (By similarity). A positive feedback loop involving HASPIN and AURKB contributes to localization of CPC to centromeres (By similarity). Phosphorylation of VIM controls vimentin filament segregation in cytokinetic process, whereas histone H3 is phosphorylated at 'Ser-10' and 'Ser-28' during mitosis (H3S10ph and H3S28ph, respectively) (PubMed:11784863). AURKB is also required for kinetochore localization of BUB1 and SGO1 (By similarity). Phosphorylation of p53/TP53 negatively regulates its transcriptional activity (By similarity). Key regulator of active promoters in resting B- and T-lymphocytes: acts by mediating phosphorylation of H3S28ph at active promoters in resting B-cells, inhibiting RNF2/RING1B-mediated ubiquitination of histone H2A and enhancing binding and activity of the USP16 deubiquitinase at transcribed genes (PubMed:24034696). Acts as an inhibitor of CGAS during mitosis: catalyzes phosphorylation of the N-terminus of CGAS during the G2-M transition, blocking CGAS liquid phase separation and activation, and thereby preventing CGAS-induced autoimmunity (By similarity). Phosphorylates KRT5 during anaphase and telophase (PubMed:29518391). Phosphorylates ATXN10 which promotes phosphorylation of ATXN10 by PLK1 and may play a role in the regulation of cytokinesis and stimulating the proteasomal degradation of ATXN10 (By similarity).</text>
</comment>
<comment type="catalytic activity">
    <reaction evidence="6">
        <text>L-seryl-[protein] + ATP = O-phospho-L-seryl-[protein] + ADP + H(+)</text>
        <dbReference type="Rhea" id="RHEA:17989"/>
        <dbReference type="Rhea" id="RHEA-COMP:9863"/>
        <dbReference type="Rhea" id="RHEA-COMP:11604"/>
        <dbReference type="ChEBI" id="CHEBI:15378"/>
        <dbReference type="ChEBI" id="CHEBI:29999"/>
        <dbReference type="ChEBI" id="CHEBI:30616"/>
        <dbReference type="ChEBI" id="CHEBI:83421"/>
        <dbReference type="ChEBI" id="CHEBI:456216"/>
        <dbReference type="EC" id="2.7.11.1"/>
    </reaction>
</comment>
<comment type="catalytic activity">
    <reaction evidence="6">
        <text>L-threonyl-[protein] + ATP = O-phospho-L-threonyl-[protein] + ADP + H(+)</text>
        <dbReference type="Rhea" id="RHEA:46608"/>
        <dbReference type="Rhea" id="RHEA-COMP:11060"/>
        <dbReference type="Rhea" id="RHEA-COMP:11605"/>
        <dbReference type="ChEBI" id="CHEBI:15378"/>
        <dbReference type="ChEBI" id="CHEBI:30013"/>
        <dbReference type="ChEBI" id="CHEBI:30616"/>
        <dbReference type="ChEBI" id="CHEBI:61977"/>
        <dbReference type="ChEBI" id="CHEBI:456216"/>
        <dbReference type="EC" id="2.7.11.1"/>
    </reaction>
</comment>
<comment type="activity regulation">
    <text evidence="1">Activity is greatly increased when AURKB is within the CPC complex. In particular, AURKB-phosphorylated INCENP acts as an activator of AURKB. Positive feedback between HASPIN and AURKB contributes to CPC localization.</text>
</comment>
<comment type="subunit">
    <text evidence="1 6">Component of the chromosomal passenger complex (CPC) composed of at least BIRC5/survivin, CDCA8/borealin, INCENP, AURKB or AURKC; predominantly independent AURKB- and AURKC-containing complexes exist. Associates with RACGAP1 during M phase. Interacts with SPDYC; this interaction may be required for proper localization of active, Thr-237-phosphorylated AURKB form during prometaphase and metaphase. Interacts with p53/TP53. Interacts (via the middle kinase domain) with NOC2L (via the N- and C-terminus domains). Interacts with CDCA1. Interacts with EVI5. Interacts with JTB. Interacts with NDC80. Interacts with PSMA3 (By similarity). Interacts with RNF2/RING1B (PubMed:24034696). Interacts with SEPTIN1. Interacts with SIRT2. Interacts with TACC1. Interacts with TTC28 (By similarity).</text>
</comment>
<comment type="subcellular location">
    <subcellularLocation>
        <location evidence="1">Nucleus</location>
    </subcellularLocation>
    <subcellularLocation>
        <location evidence="1">Chromosome</location>
    </subcellularLocation>
    <subcellularLocation>
        <location evidence="1">Chromosome</location>
        <location evidence="1">Centromere</location>
    </subcellularLocation>
    <subcellularLocation>
        <location evidence="1">Chromosome</location>
        <location evidence="1">Centromere</location>
        <location evidence="1">Kinetochore</location>
    </subcellularLocation>
    <subcellularLocation>
        <location evidence="1">Cytoplasm</location>
        <location evidence="1">Cytoskeleton</location>
        <location evidence="1">Spindle</location>
    </subcellularLocation>
    <subcellularLocation>
        <location evidence="1">Midbody</location>
    </subcellularLocation>
    <text evidence="1">Localizes on chromosome arms and inner centromeres from prophase through metaphase and then transferring to the spindle midzone and midbody from anaphase through cytokinesis. Colocalized with gamma tubulin in the midbody. Proper localization of the active, Thr-237-phosphorylated form during metaphase may be dependent upon interaction with SPDYC. Colocalized with SIRT2 during cytokinesis with the midbody. Localization (and probably targeting of the CPC) to the inner centromere occurs predominantly in regions with overlapping mitosis-specific histone phosphorylations H3pT3 and H2ApT12.</text>
</comment>
<comment type="tissue specificity">
    <text evidence="8">Expressed in testis, intestine and spleen. All of them are tissues that contain a large number of proliferating cells. Expressed during S phase, in a cell-cycle-dependent fashion.</text>
</comment>
<comment type="developmental stage">
    <text evidence="8">Strongly expressed in 8.5 and 12.5 dpc.</text>
</comment>
<comment type="PTM">
    <text evidence="1">The phosphorylation of Thr-237 requires the binding to INCENP and occurs by means of an autophosphorylation mechanism. Thr-237 phosphorylation is indispensable for the AURKB kinase activity.</text>
</comment>
<comment type="PTM">
    <text evidence="1">Acetylated at Lys-220 by KAT5 at kinetochores, increasing AURKB activity and promoting accurate chromosome segregation in mitosis.</text>
</comment>
<comment type="PTM">
    <text evidence="1">Ubiquitinated by different BCR (BTB-CUL3-RBX1) E3 ubiquitin ligase complexes. Ubiquitinated by the BCR(KLHL9-KLHL13) E3 ubiquitin ligase complex, ubiquitination leads to removal from mitotic chromosomes and is required for cytokinesis. During anaphase, the BCR(KLHL21) E3 ubiquitin ligase complex recruits the CPC complex from chromosomes to the spindle midzone and mediates the ubiquitination of AURKB. Ubiquitination of AURKB by BCR(KLHL21) E3 ubiquitin ligase complex may not lead to its degradation by the proteasome. Deubiquitinated by USP35; inhibiting CDH1-mediated degradation of AURKB.</text>
</comment>
<comment type="similarity">
    <text evidence="2">Belongs to the protein kinase superfamily. Ser/Thr protein kinase family. Aurora subfamily.</text>
</comment>